<organism>
    <name type="scientific">Staphylococcus epidermidis (strain ATCC 35984 / DSM 28319 / BCRC 17069 / CCUG 31568 / BM 3577 / RP62A)</name>
    <dbReference type="NCBI Taxonomy" id="176279"/>
    <lineage>
        <taxon>Bacteria</taxon>
        <taxon>Bacillati</taxon>
        <taxon>Bacillota</taxon>
        <taxon>Bacilli</taxon>
        <taxon>Bacillales</taxon>
        <taxon>Staphylococcaceae</taxon>
        <taxon>Staphylococcus</taxon>
    </lineage>
</organism>
<reference key="1">
    <citation type="journal article" date="2005" name="J. Bacteriol.">
        <title>Insights on evolution of virulence and resistance from the complete genome analysis of an early methicillin-resistant Staphylococcus aureus strain and a biofilm-producing methicillin-resistant Staphylococcus epidermidis strain.</title>
        <authorList>
            <person name="Gill S.R."/>
            <person name="Fouts D.E."/>
            <person name="Archer G.L."/>
            <person name="Mongodin E.F."/>
            <person name="DeBoy R.T."/>
            <person name="Ravel J."/>
            <person name="Paulsen I.T."/>
            <person name="Kolonay J.F."/>
            <person name="Brinkac L.M."/>
            <person name="Beanan M.J."/>
            <person name="Dodson R.J."/>
            <person name="Daugherty S.C."/>
            <person name="Madupu R."/>
            <person name="Angiuoli S.V."/>
            <person name="Durkin A.S."/>
            <person name="Haft D.H."/>
            <person name="Vamathevan J.J."/>
            <person name="Khouri H."/>
            <person name="Utterback T.R."/>
            <person name="Lee C."/>
            <person name="Dimitrov G."/>
            <person name="Jiang L."/>
            <person name="Qin H."/>
            <person name="Weidman J."/>
            <person name="Tran K."/>
            <person name="Kang K.H."/>
            <person name="Hance I.R."/>
            <person name="Nelson K.E."/>
            <person name="Fraser C.M."/>
        </authorList>
    </citation>
    <scope>NUCLEOTIDE SEQUENCE [LARGE SCALE GENOMIC DNA]</scope>
    <source>
        <strain>ATCC 35984 / DSM 28319 / BCRC 17069 / CCUG 31568 / BM 3577 / RP62A</strain>
    </source>
</reference>
<name>UREE_STAEQ</name>
<proteinExistence type="inferred from homology"/>
<sequence length="150" mass="17497">MIIEEIQGNIANLSQDEKQKHVEKVYLENSDLVKRIQRVKTDHGNEIGIRLKQPIDLQYGDILYQDDTNMIIVDVNSEDLLVIKPRNLKEMGDIAHQLGNRHLPAQFTETEMLIQYDYLVEDLLKELGIPYSHEDRKVNQAFRHIGHSHD</sequence>
<dbReference type="EMBL" id="CP000029">
    <property type="protein sequence ID" value="AAW55244.1"/>
    <property type="molecule type" value="Genomic_DNA"/>
</dbReference>
<dbReference type="RefSeq" id="WP_001832382.1">
    <property type="nucleotide sequence ID" value="NC_002976.3"/>
</dbReference>
<dbReference type="SMR" id="Q5HLW0"/>
<dbReference type="STRING" id="176279.SERP1872"/>
<dbReference type="GeneID" id="50018035"/>
<dbReference type="KEGG" id="ser:SERP1872"/>
<dbReference type="eggNOG" id="COG2371">
    <property type="taxonomic scope" value="Bacteria"/>
</dbReference>
<dbReference type="HOGENOM" id="CLU_093757_3_1_9"/>
<dbReference type="Proteomes" id="UP000000531">
    <property type="component" value="Chromosome"/>
</dbReference>
<dbReference type="GO" id="GO:0005737">
    <property type="term" value="C:cytoplasm"/>
    <property type="evidence" value="ECO:0007669"/>
    <property type="project" value="UniProtKB-SubCell"/>
</dbReference>
<dbReference type="GO" id="GO:0016151">
    <property type="term" value="F:nickel cation binding"/>
    <property type="evidence" value="ECO:0007669"/>
    <property type="project" value="UniProtKB-UniRule"/>
</dbReference>
<dbReference type="GO" id="GO:0051082">
    <property type="term" value="F:unfolded protein binding"/>
    <property type="evidence" value="ECO:0007669"/>
    <property type="project" value="UniProtKB-UniRule"/>
</dbReference>
<dbReference type="GO" id="GO:0006457">
    <property type="term" value="P:protein folding"/>
    <property type="evidence" value="ECO:0007669"/>
    <property type="project" value="InterPro"/>
</dbReference>
<dbReference type="GO" id="GO:0065003">
    <property type="term" value="P:protein-containing complex assembly"/>
    <property type="evidence" value="ECO:0007669"/>
    <property type="project" value="InterPro"/>
</dbReference>
<dbReference type="GO" id="GO:0019627">
    <property type="term" value="P:urea metabolic process"/>
    <property type="evidence" value="ECO:0007669"/>
    <property type="project" value="InterPro"/>
</dbReference>
<dbReference type="CDD" id="cd00571">
    <property type="entry name" value="UreE"/>
    <property type="match status" value="1"/>
</dbReference>
<dbReference type="Gene3D" id="2.60.260.20">
    <property type="entry name" value="Urease metallochaperone UreE, N-terminal domain"/>
    <property type="match status" value="1"/>
</dbReference>
<dbReference type="Gene3D" id="3.30.70.790">
    <property type="entry name" value="UreE, C-terminal domain"/>
    <property type="match status" value="1"/>
</dbReference>
<dbReference type="HAMAP" id="MF_00822">
    <property type="entry name" value="UreE"/>
    <property type="match status" value="1"/>
</dbReference>
<dbReference type="InterPro" id="IPR012406">
    <property type="entry name" value="UreE"/>
</dbReference>
<dbReference type="InterPro" id="IPR007864">
    <property type="entry name" value="UreE_C_dom"/>
</dbReference>
<dbReference type="InterPro" id="IPR004029">
    <property type="entry name" value="UreE_N"/>
</dbReference>
<dbReference type="InterPro" id="IPR036118">
    <property type="entry name" value="UreE_N_sf"/>
</dbReference>
<dbReference type="NCBIfam" id="NF009755">
    <property type="entry name" value="PRK13261.2-1"/>
    <property type="match status" value="1"/>
</dbReference>
<dbReference type="Pfam" id="PF05194">
    <property type="entry name" value="UreE_C"/>
    <property type="match status" value="1"/>
</dbReference>
<dbReference type="Pfam" id="PF02814">
    <property type="entry name" value="UreE_N"/>
    <property type="match status" value="1"/>
</dbReference>
<dbReference type="PIRSF" id="PIRSF036402">
    <property type="entry name" value="Ureas_acces_UreE"/>
    <property type="match status" value="1"/>
</dbReference>
<dbReference type="SMART" id="SM00988">
    <property type="entry name" value="UreE_N"/>
    <property type="match status" value="1"/>
</dbReference>
<dbReference type="SUPFAM" id="SSF69737">
    <property type="entry name" value="Urease metallochaperone UreE, C-terminal domain"/>
    <property type="match status" value="1"/>
</dbReference>
<dbReference type="SUPFAM" id="SSF69287">
    <property type="entry name" value="Urease metallochaperone UreE, N-terminal domain"/>
    <property type="match status" value="1"/>
</dbReference>
<keyword id="KW-0143">Chaperone</keyword>
<keyword id="KW-0963">Cytoplasm</keyword>
<keyword id="KW-0533">Nickel</keyword>
<keyword id="KW-0996">Nickel insertion</keyword>
<keyword id="KW-1185">Reference proteome</keyword>
<comment type="function">
    <text evidence="1">Involved in urease metallocenter assembly. Binds nickel. Probably functions as a nickel donor during metallocenter assembly.</text>
</comment>
<comment type="subcellular location">
    <subcellularLocation>
        <location evidence="1">Cytoplasm</location>
    </subcellularLocation>
</comment>
<comment type="similarity">
    <text evidence="1">Belongs to the UreE family.</text>
</comment>
<protein>
    <recommendedName>
        <fullName evidence="1">Urease accessory protein UreE</fullName>
    </recommendedName>
</protein>
<feature type="chain" id="PRO_0000223444" description="Urease accessory protein UreE">
    <location>
        <begin position="1"/>
        <end position="150"/>
    </location>
</feature>
<accession>Q5HLW0</accession>
<gene>
    <name evidence="1" type="primary">ureE</name>
    <name type="ordered locus">SERP1872</name>
</gene>
<evidence type="ECO:0000255" key="1">
    <source>
        <dbReference type="HAMAP-Rule" id="MF_00822"/>
    </source>
</evidence>